<feature type="chain" id="PRO_0000460015" description="Cyclic GMP-AMP synthase-like receptor 1">
    <location>
        <begin position="1"/>
        <end position="633"/>
    </location>
</feature>
<feature type="region of interest" description="Disordered" evidence="3">
    <location>
        <begin position="23"/>
        <end position="80"/>
    </location>
</feature>
<feature type="region of interest" description="Disordered" evidence="3">
    <location>
        <begin position="107"/>
        <end position="214"/>
    </location>
</feature>
<feature type="region of interest" description="Disordered" evidence="3">
    <location>
        <begin position="250"/>
        <end position="276"/>
    </location>
</feature>
<feature type="compositionally biased region" description="Basic and acidic residues" evidence="3">
    <location>
        <begin position="29"/>
        <end position="67"/>
    </location>
</feature>
<feature type="compositionally biased region" description="Polar residues" evidence="3">
    <location>
        <begin position="68"/>
        <end position="80"/>
    </location>
</feature>
<feature type="compositionally biased region" description="Basic and acidic residues" evidence="3">
    <location>
        <begin position="125"/>
        <end position="143"/>
    </location>
</feature>
<feature type="compositionally biased region" description="Basic and acidic residues" evidence="3">
    <location>
        <begin position="176"/>
        <end position="194"/>
    </location>
</feature>
<feature type="compositionally biased region" description="Basic and acidic residues" evidence="3">
    <location>
        <begin position="250"/>
        <end position="274"/>
    </location>
</feature>
<feature type="binding site" evidence="2">
    <location>
        <position position="353"/>
    </location>
    <ligand>
        <name>Mg(2+)</name>
        <dbReference type="ChEBI" id="CHEBI:18420"/>
        <note>catalytic</note>
    </ligand>
</feature>
<feature type="binding site" evidence="2">
    <location>
        <position position="355"/>
    </location>
    <ligand>
        <name>Mg(2+)</name>
        <dbReference type="ChEBI" id="CHEBI:18420"/>
        <note>catalytic</note>
    </ligand>
</feature>
<feature type="binding site" evidence="2">
    <location>
        <position position="455"/>
    </location>
    <ligand>
        <name>Mg(2+)</name>
        <dbReference type="ChEBI" id="CHEBI:18420"/>
        <note>catalytic</note>
    </ligand>
</feature>
<feature type="helix" evidence="8">
    <location>
        <begin position="290"/>
        <end position="303"/>
    </location>
</feature>
<feature type="turn" evidence="8">
    <location>
        <begin position="304"/>
        <end position="307"/>
    </location>
</feature>
<feature type="helix" evidence="8">
    <location>
        <begin position="308"/>
        <end position="326"/>
    </location>
</feature>
<feature type="turn" evidence="8">
    <location>
        <begin position="327"/>
        <end position="329"/>
    </location>
</feature>
<feature type="strand" evidence="8">
    <location>
        <begin position="334"/>
        <end position="340"/>
    </location>
</feature>
<feature type="helix" evidence="8">
    <location>
        <begin position="341"/>
        <end position="344"/>
    </location>
</feature>
<feature type="strand" evidence="8">
    <location>
        <begin position="354"/>
        <end position="362"/>
    </location>
</feature>
<feature type="strand" evidence="8">
    <location>
        <begin position="364"/>
        <end position="367"/>
    </location>
</feature>
<feature type="strand" evidence="8">
    <location>
        <begin position="375"/>
        <end position="380"/>
    </location>
</feature>
<feature type="helix" evidence="8">
    <location>
        <begin position="389"/>
        <end position="391"/>
    </location>
</feature>
<feature type="strand" evidence="8">
    <location>
        <begin position="396"/>
        <end position="398"/>
    </location>
</feature>
<feature type="helix" evidence="8">
    <location>
        <begin position="400"/>
        <end position="416"/>
    </location>
</feature>
<feature type="helix" evidence="8">
    <location>
        <begin position="421"/>
        <end position="425"/>
    </location>
</feature>
<feature type="strand" evidence="8">
    <location>
        <begin position="426"/>
        <end position="428"/>
    </location>
</feature>
<feature type="strand" evidence="8">
    <location>
        <begin position="438"/>
        <end position="442"/>
    </location>
</feature>
<feature type="strand" evidence="8">
    <location>
        <begin position="452"/>
        <end position="464"/>
    </location>
</feature>
<feature type="helix" evidence="8">
    <location>
        <begin position="479"/>
        <end position="485"/>
    </location>
</feature>
<feature type="strand" evidence="8">
    <location>
        <begin position="489"/>
        <end position="492"/>
    </location>
</feature>
<feature type="helix" evidence="8">
    <location>
        <begin position="503"/>
        <end position="505"/>
    </location>
</feature>
<feature type="strand" evidence="8">
    <location>
        <begin position="507"/>
        <end position="510"/>
    </location>
</feature>
<feature type="helix" evidence="8">
    <location>
        <begin position="512"/>
        <end position="520"/>
    </location>
</feature>
<feature type="turn" evidence="8">
    <location>
        <begin position="521"/>
        <end position="523"/>
    </location>
</feature>
<feature type="strand" evidence="8">
    <location>
        <begin position="524"/>
        <end position="526"/>
    </location>
</feature>
<feature type="helix" evidence="8">
    <location>
        <begin position="530"/>
        <end position="547"/>
    </location>
</feature>
<feature type="turn" evidence="8">
    <location>
        <begin position="549"/>
        <end position="551"/>
    </location>
</feature>
<feature type="helix" evidence="8">
    <location>
        <begin position="557"/>
        <end position="570"/>
    </location>
</feature>
<feature type="helix" evidence="8">
    <location>
        <begin position="576"/>
        <end position="578"/>
    </location>
</feature>
<feature type="helix" evidence="8">
    <location>
        <begin position="579"/>
        <end position="596"/>
    </location>
</feature>
<feature type="strand" evidence="8">
    <location>
        <begin position="602"/>
        <end position="604"/>
    </location>
</feature>
<feature type="turn" evidence="8">
    <location>
        <begin position="609"/>
        <end position="612"/>
    </location>
</feature>
<feature type="helix" evidence="8">
    <location>
        <begin position="615"/>
        <end position="629"/>
    </location>
</feature>
<protein>
    <recommendedName>
        <fullName>Cyclic GMP-AMP synthase-like receptor 1</fullName>
        <shortName evidence="5">Cv-cGLR1</shortName>
    </recommendedName>
    <alternativeName>
        <fullName evidence="6">Cyclic UMP-AMP synthase cGLR1</fullName>
        <ecNumber evidence="4">2.7.7.-</ecNumber>
    </alternativeName>
</protein>
<comment type="function">
    <text evidence="4">Nucleotidyltransferase that catalyzes the formation of cyclic UMP-AMP (2',3'-cUAMP) from ATP and UTP and plays a key role in innate immunity (PubMed:37379839). Acts as a key sensor of double-stranded DNA (dsDNA), the presence of dsDNA in the cytoplasm being a danger signal that triggers the immune responses (PubMed:37379839). Directly binds dsDNA, activating the nucleotidyltransferase activity, leading to synthesis of 2',3'-cUAMP, a second messenger that binds to and activates Sting, thereby triggering the immune response via activation of the NF-kappa-B transcription factor (PubMed:37379839).</text>
</comment>
<comment type="catalytic activity">
    <reaction evidence="4">
        <text>UTP + ATP = 2',3'-cUAMP + 2 diphosphate</text>
        <dbReference type="Rhea" id="RHEA:78335"/>
        <dbReference type="ChEBI" id="CHEBI:30616"/>
        <dbReference type="ChEBI" id="CHEBI:33019"/>
        <dbReference type="ChEBI" id="CHEBI:46398"/>
        <dbReference type="ChEBI" id="CHEBI:228269"/>
    </reaction>
    <physiologicalReaction direction="left-to-right" evidence="4">
        <dbReference type="Rhea" id="RHEA:78336"/>
    </physiologicalReaction>
</comment>
<comment type="cofactor">
    <cofactor evidence="1">
        <name>Mg(2+)</name>
        <dbReference type="ChEBI" id="CHEBI:18420"/>
    </cofactor>
    <cofactor evidence="1">
        <name>Mn(2+)</name>
        <dbReference type="ChEBI" id="CHEBI:29035"/>
    </cofactor>
</comment>
<comment type="similarity">
    <text evidence="6">Belongs to the mab-21 family.</text>
</comment>
<keyword id="KW-0002">3D-structure</keyword>
<keyword id="KW-0067">ATP-binding</keyword>
<keyword id="KW-0238">DNA-binding</keyword>
<keyword id="KW-0391">Immunity</keyword>
<keyword id="KW-0399">Innate immunity</keyword>
<keyword id="KW-0460">Magnesium</keyword>
<keyword id="KW-0464">Manganese</keyword>
<keyword id="KW-0479">Metal-binding</keyword>
<keyword id="KW-0547">Nucleotide-binding</keyword>
<keyword id="KW-0548">Nucleotidyltransferase</keyword>
<keyword id="KW-1185">Reference proteome</keyword>
<keyword id="KW-0808">Transferase</keyword>
<gene>
    <name evidence="5" type="primary">cGLR1</name>
</gene>
<sequence length="633" mass="72589">MYCNICKRNDFKNEHGLNIHKAKVHGIRKQHESAHPPRERHTERTATKRSDETKTASRPTASHEGKTHTTNPRGQVHPHTSNDVVRQSAMIVQMEAIQKCPLLGNHFKGPADVHPQRTKTPSGARKPETPKKPHSATKDDHRTKTPGTPHSADTRTPSSTGTDFGGVRPKTPRGARKPDTPKKPHSATKDDHRTKTPGTPHSADTRTPSSTDPFICPICDGKSFKYEGWFIKHMENKHPGCAFGVVAKGREDDKSDQEKRDSWKRREGSVDDRPSSVAPNFADSFNIKTFEKWVTVAEASIIRQKTDTDETIDCMNRFIKMLESTMNGISHFPLKTFKSGSYYDRTKIDYNDEFDFMFFPDMKMEAVFTNCPPGYCKIRKGVTNSKDLDPYLNKDGFLVPGLFKQAMFDLFEKSLSDGTFREGRRTTRQTSKPGSPAYTILYNLGIHGKRPIDVDLVPAIRIECWPKPAKEIKPDWVKKETTERATRCFHAVMKTYPENWPDGDLLWRISFTHAEKELILHANEKEKGCRKDIFRLLKKIKEVMKSRNSNDIDKFCSYHLKMFMLKFFDKEKYFRNEMKVDLLKKAIKKLGESVEHGNIPNYFIPEDNVIVNVLEKERTLIAKELRALLEGNW</sequence>
<reference key="1">
    <citation type="submission" date="2017-02" db="EMBL/GenBank/DDBJ databases">
        <authorList>
            <person name="Warren W.C."/>
            <person name="Gomez-Chiarri M."/>
            <person name="Tomlinson C."/>
            <person name="Guo X."/>
        </authorList>
    </citation>
    <scope>NUCLEOTIDE SEQUENCE [LARGE SCALE GENOMIC DNA]</scope>
</reference>
<reference evidence="7" key="2">
    <citation type="journal article" date="2023" name="Cell">
        <title>cGLRs are a diverse family of pattern recognition receptors in innate immunity.</title>
        <authorList>
            <person name="Li Y."/>
            <person name="Slavik K.M."/>
            <person name="Toyoda H.C."/>
            <person name="Morehouse B.R."/>
            <person name="de Oliveira Mann C.C."/>
            <person name="Elek A."/>
            <person name="Levy S."/>
            <person name="Wang Z."/>
            <person name="Mears K.S."/>
            <person name="Liu J."/>
            <person name="Kashin D."/>
            <person name="Guo X."/>
            <person name="Mass T."/>
            <person name="Sebe-Pedros A."/>
            <person name="Schwede F."/>
            <person name="Kranzusch P.J."/>
        </authorList>
    </citation>
    <scope>X-RAY CRYSTALLOGRAPHY (1.93 ANGSTROMS) OF 280-633</scope>
    <scope>FUNCTION</scope>
    <scope>CATALYTIC ACTIVITY</scope>
</reference>
<accession>A0A8B8BQ58</accession>
<dbReference type="EC" id="2.7.7.-" evidence="4"/>
<dbReference type="EMBL" id="MWPT03000001">
    <property type="status" value="NOT_ANNOTATED_CDS"/>
    <property type="molecule type" value="Genomic_DNA"/>
</dbReference>
<dbReference type="PDB" id="8GJW">
    <property type="method" value="X-ray"/>
    <property type="resolution" value="1.93 A"/>
    <property type="chains" value="A=280-633"/>
</dbReference>
<dbReference type="PDBsum" id="8GJW"/>
<dbReference type="SMR" id="A0A8B8BQ58"/>
<dbReference type="OrthoDB" id="6149058at2759"/>
<dbReference type="Proteomes" id="UP000694844">
    <property type="component" value="Chromosome 9"/>
</dbReference>
<dbReference type="GO" id="GO:0005524">
    <property type="term" value="F:ATP binding"/>
    <property type="evidence" value="ECO:0007669"/>
    <property type="project" value="UniProtKB-KW"/>
</dbReference>
<dbReference type="GO" id="GO:0003690">
    <property type="term" value="F:double-stranded DNA binding"/>
    <property type="evidence" value="ECO:0000314"/>
    <property type="project" value="UniProtKB"/>
</dbReference>
<dbReference type="GO" id="GO:0046872">
    <property type="term" value="F:metal ion binding"/>
    <property type="evidence" value="ECO:0007669"/>
    <property type="project" value="UniProtKB-KW"/>
</dbReference>
<dbReference type="GO" id="GO:0016779">
    <property type="term" value="F:nucleotidyltransferase activity"/>
    <property type="evidence" value="ECO:0007669"/>
    <property type="project" value="UniProtKB-KW"/>
</dbReference>
<dbReference type="GO" id="GO:0045087">
    <property type="term" value="P:innate immune response"/>
    <property type="evidence" value="ECO:0007669"/>
    <property type="project" value="UniProtKB-KW"/>
</dbReference>
<dbReference type="Gene3D" id="1.10.1410.40">
    <property type="match status" value="1"/>
</dbReference>
<dbReference type="Gene3D" id="3.30.460.90">
    <property type="match status" value="1"/>
</dbReference>
<dbReference type="InterPro" id="IPR046903">
    <property type="entry name" value="Mab-21-like_nuc_Trfase"/>
</dbReference>
<dbReference type="InterPro" id="IPR046906">
    <property type="entry name" value="Mab-21_HhH/H2TH-like"/>
</dbReference>
<dbReference type="InterPro" id="IPR024810">
    <property type="entry name" value="MAB21L/cGLR"/>
</dbReference>
<dbReference type="InterPro" id="IPR013087">
    <property type="entry name" value="Znf_C2H2_type"/>
</dbReference>
<dbReference type="PANTHER" id="PTHR10656">
    <property type="entry name" value="CELL FATE DETERMINING PROTEIN MAB21-RELATED"/>
    <property type="match status" value="1"/>
</dbReference>
<dbReference type="PANTHER" id="PTHR10656:SF78">
    <property type="entry name" value="CYCLIC GMP-AMP SYNTHASE-LIKE"/>
    <property type="match status" value="1"/>
</dbReference>
<dbReference type="Pfam" id="PF03281">
    <property type="entry name" value="Mab-21"/>
    <property type="match status" value="1"/>
</dbReference>
<dbReference type="Pfam" id="PF20266">
    <property type="entry name" value="Mab-21_C"/>
    <property type="match status" value="1"/>
</dbReference>
<dbReference type="SMART" id="SM01265">
    <property type="entry name" value="Mab-21"/>
    <property type="match status" value="1"/>
</dbReference>
<dbReference type="SMART" id="SM00355">
    <property type="entry name" value="ZnF_C2H2"/>
    <property type="match status" value="2"/>
</dbReference>
<name>CGLR1_CRAVI</name>
<proteinExistence type="evidence at protein level"/>
<organism>
    <name type="scientific">Crassostrea virginica</name>
    <name type="common">Eastern oyster</name>
    <dbReference type="NCBI Taxonomy" id="6565"/>
    <lineage>
        <taxon>Eukaryota</taxon>
        <taxon>Metazoa</taxon>
        <taxon>Spiralia</taxon>
        <taxon>Lophotrochozoa</taxon>
        <taxon>Mollusca</taxon>
        <taxon>Bivalvia</taxon>
        <taxon>Autobranchia</taxon>
        <taxon>Pteriomorphia</taxon>
        <taxon>Ostreida</taxon>
        <taxon>Ostreoidea</taxon>
        <taxon>Ostreidae</taxon>
        <taxon>Crassostrea</taxon>
    </lineage>
</organism>
<evidence type="ECO:0000250" key="1">
    <source>
        <dbReference type="UniProtKB" id="D6WI29"/>
    </source>
</evidence>
<evidence type="ECO:0000250" key="2">
    <source>
        <dbReference type="UniProtKB" id="Q8N884"/>
    </source>
</evidence>
<evidence type="ECO:0000256" key="3">
    <source>
        <dbReference type="SAM" id="MobiDB-lite"/>
    </source>
</evidence>
<evidence type="ECO:0000269" key="4">
    <source>
    </source>
</evidence>
<evidence type="ECO:0000303" key="5">
    <source>
    </source>
</evidence>
<evidence type="ECO:0000305" key="6"/>
<evidence type="ECO:0007744" key="7">
    <source>
        <dbReference type="PDB" id="8GJW"/>
    </source>
</evidence>
<evidence type="ECO:0007829" key="8">
    <source>
        <dbReference type="PDB" id="8GJW"/>
    </source>
</evidence>